<dbReference type="EMBL" id="AE006470">
    <property type="protein sequence ID" value="AAM73328.1"/>
    <property type="molecule type" value="Genomic_DNA"/>
</dbReference>
<dbReference type="RefSeq" id="NP_662986.1">
    <property type="nucleotide sequence ID" value="NC_002932.3"/>
</dbReference>
<dbReference type="RefSeq" id="WP_010933766.1">
    <property type="nucleotide sequence ID" value="NC_002932.3"/>
</dbReference>
<dbReference type="SMR" id="Q8KAP4"/>
<dbReference type="STRING" id="194439.CT2112"/>
<dbReference type="EnsemblBacteria" id="AAM73328">
    <property type="protein sequence ID" value="AAM73328"/>
    <property type="gene ID" value="CT2112"/>
</dbReference>
<dbReference type="KEGG" id="cte:CT2112"/>
<dbReference type="PATRIC" id="fig|194439.7.peg.1913"/>
<dbReference type="eggNOG" id="COG0333">
    <property type="taxonomic scope" value="Bacteria"/>
</dbReference>
<dbReference type="HOGENOM" id="CLU_129084_1_3_10"/>
<dbReference type="OrthoDB" id="9812874at2"/>
<dbReference type="Proteomes" id="UP000001007">
    <property type="component" value="Chromosome"/>
</dbReference>
<dbReference type="GO" id="GO:0015934">
    <property type="term" value="C:large ribosomal subunit"/>
    <property type="evidence" value="ECO:0007669"/>
    <property type="project" value="InterPro"/>
</dbReference>
<dbReference type="GO" id="GO:0003735">
    <property type="term" value="F:structural constituent of ribosome"/>
    <property type="evidence" value="ECO:0007669"/>
    <property type="project" value="InterPro"/>
</dbReference>
<dbReference type="GO" id="GO:0006412">
    <property type="term" value="P:translation"/>
    <property type="evidence" value="ECO:0007669"/>
    <property type="project" value="UniProtKB-UniRule"/>
</dbReference>
<dbReference type="HAMAP" id="MF_00340">
    <property type="entry name" value="Ribosomal_bL32"/>
    <property type="match status" value="1"/>
</dbReference>
<dbReference type="InterPro" id="IPR002677">
    <property type="entry name" value="Ribosomal_bL32"/>
</dbReference>
<dbReference type="InterPro" id="IPR044957">
    <property type="entry name" value="Ribosomal_bL32_bact"/>
</dbReference>
<dbReference type="InterPro" id="IPR011332">
    <property type="entry name" value="Ribosomal_zn-bd"/>
</dbReference>
<dbReference type="NCBIfam" id="TIGR01031">
    <property type="entry name" value="rpmF_bact"/>
    <property type="match status" value="1"/>
</dbReference>
<dbReference type="PANTHER" id="PTHR35534">
    <property type="entry name" value="50S RIBOSOMAL PROTEIN L32"/>
    <property type="match status" value="1"/>
</dbReference>
<dbReference type="PANTHER" id="PTHR35534:SF1">
    <property type="entry name" value="LARGE RIBOSOMAL SUBUNIT PROTEIN BL32"/>
    <property type="match status" value="1"/>
</dbReference>
<dbReference type="Pfam" id="PF01783">
    <property type="entry name" value="Ribosomal_L32p"/>
    <property type="match status" value="1"/>
</dbReference>
<dbReference type="SUPFAM" id="SSF57829">
    <property type="entry name" value="Zn-binding ribosomal proteins"/>
    <property type="match status" value="1"/>
</dbReference>
<proteinExistence type="inferred from homology"/>
<protein>
    <recommendedName>
        <fullName evidence="1">Large ribosomal subunit protein bL32</fullName>
    </recommendedName>
    <alternativeName>
        <fullName evidence="3">50S ribosomal protein L32</fullName>
    </alternativeName>
</protein>
<sequence>MANPKAKMSKSRRDKRRAQFNARTKAAVTVVCPNCGEPTLPHRACRHCGHYKGRQVTGKSVVA</sequence>
<keyword id="KW-1185">Reference proteome</keyword>
<keyword id="KW-0687">Ribonucleoprotein</keyword>
<keyword id="KW-0689">Ribosomal protein</keyword>
<accession>Q8KAP4</accession>
<feature type="chain" id="PRO_0000172328" description="Large ribosomal subunit protein bL32">
    <location>
        <begin position="1"/>
        <end position="63"/>
    </location>
</feature>
<feature type="region of interest" description="Disordered" evidence="2">
    <location>
        <begin position="1"/>
        <end position="20"/>
    </location>
</feature>
<feature type="compositionally biased region" description="Basic residues" evidence="2">
    <location>
        <begin position="7"/>
        <end position="18"/>
    </location>
</feature>
<name>RL32_CHLTE</name>
<reference key="1">
    <citation type="journal article" date="2002" name="Proc. Natl. Acad. Sci. U.S.A.">
        <title>The complete genome sequence of Chlorobium tepidum TLS, a photosynthetic, anaerobic, green-sulfur bacterium.</title>
        <authorList>
            <person name="Eisen J.A."/>
            <person name="Nelson K.E."/>
            <person name="Paulsen I.T."/>
            <person name="Heidelberg J.F."/>
            <person name="Wu M."/>
            <person name="Dodson R.J."/>
            <person name="DeBoy R.T."/>
            <person name="Gwinn M.L."/>
            <person name="Nelson W.C."/>
            <person name="Haft D.H."/>
            <person name="Hickey E.K."/>
            <person name="Peterson J.D."/>
            <person name="Durkin A.S."/>
            <person name="Kolonay J.F."/>
            <person name="Yang F."/>
            <person name="Holt I.E."/>
            <person name="Umayam L.A."/>
            <person name="Mason T.M."/>
            <person name="Brenner M."/>
            <person name="Shea T.P."/>
            <person name="Parksey D.S."/>
            <person name="Nierman W.C."/>
            <person name="Feldblyum T.V."/>
            <person name="Hansen C.L."/>
            <person name="Craven M.B."/>
            <person name="Radune D."/>
            <person name="Vamathevan J.J."/>
            <person name="Khouri H.M."/>
            <person name="White O."/>
            <person name="Gruber T.M."/>
            <person name="Ketchum K.A."/>
            <person name="Venter J.C."/>
            <person name="Tettelin H."/>
            <person name="Bryant D.A."/>
            <person name="Fraser C.M."/>
        </authorList>
    </citation>
    <scope>NUCLEOTIDE SEQUENCE [LARGE SCALE GENOMIC DNA]</scope>
    <source>
        <strain>ATCC 49652 / DSM 12025 / NBRC 103806 / TLS</strain>
    </source>
</reference>
<comment type="similarity">
    <text evidence="1">Belongs to the bacterial ribosomal protein bL32 family.</text>
</comment>
<organism>
    <name type="scientific">Chlorobaculum tepidum (strain ATCC 49652 / DSM 12025 / NBRC 103806 / TLS)</name>
    <name type="common">Chlorobium tepidum</name>
    <dbReference type="NCBI Taxonomy" id="194439"/>
    <lineage>
        <taxon>Bacteria</taxon>
        <taxon>Pseudomonadati</taxon>
        <taxon>Chlorobiota</taxon>
        <taxon>Chlorobiia</taxon>
        <taxon>Chlorobiales</taxon>
        <taxon>Chlorobiaceae</taxon>
        <taxon>Chlorobaculum</taxon>
    </lineage>
</organism>
<evidence type="ECO:0000255" key="1">
    <source>
        <dbReference type="HAMAP-Rule" id="MF_00340"/>
    </source>
</evidence>
<evidence type="ECO:0000256" key="2">
    <source>
        <dbReference type="SAM" id="MobiDB-lite"/>
    </source>
</evidence>
<evidence type="ECO:0000305" key="3"/>
<gene>
    <name evidence="1" type="primary">rpmF</name>
    <name type="ordered locus">CT2112</name>
</gene>